<evidence type="ECO:0000255" key="1">
    <source>
        <dbReference type="HAMAP-Rule" id="MF_00446"/>
    </source>
</evidence>
<dbReference type="EC" id="4.1.1.11" evidence="1"/>
<dbReference type="EMBL" id="AP009049">
    <property type="protein sequence ID" value="BAH06559.1"/>
    <property type="molecule type" value="Genomic_DNA"/>
</dbReference>
<dbReference type="RefSeq" id="WP_012102018.1">
    <property type="nucleotide sequence ID" value="NC_011837.1"/>
</dbReference>
<dbReference type="SMR" id="B9E234"/>
<dbReference type="KEGG" id="ckr:CKR_1508"/>
<dbReference type="HOGENOM" id="CLU_115305_2_0_9"/>
<dbReference type="UniPathway" id="UPA00028">
    <property type="reaction ID" value="UER00002"/>
</dbReference>
<dbReference type="Proteomes" id="UP000007969">
    <property type="component" value="Chromosome"/>
</dbReference>
<dbReference type="GO" id="GO:0005829">
    <property type="term" value="C:cytosol"/>
    <property type="evidence" value="ECO:0007669"/>
    <property type="project" value="TreeGrafter"/>
</dbReference>
<dbReference type="GO" id="GO:0004068">
    <property type="term" value="F:aspartate 1-decarboxylase activity"/>
    <property type="evidence" value="ECO:0007669"/>
    <property type="project" value="UniProtKB-UniRule"/>
</dbReference>
<dbReference type="GO" id="GO:0006523">
    <property type="term" value="P:alanine biosynthetic process"/>
    <property type="evidence" value="ECO:0007669"/>
    <property type="project" value="InterPro"/>
</dbReference>
<dbReference type="GO" id="GO:0015940">
    <property type="term" value="P:pantothenate biosynthetic process"/>
    <property type="evidence" value="ECO:0007669"/>
    <property type="project" value="UniProtKB-UniRule"/>
</dbReference>
<dbReference type="CDD" id="cd06919">
    <property type="entry name" value="Asp_decarbox"/>
    <property type="match status" value="1"/>
</dbReference>
<dbReference type="Gene3D" id="2.40.40.20">
    <property type="match status" value="1"/>
</dbReference>
<dbReference type="HAMAP" id="MF_00446">
    <property type="entry name" value="PanD"/>
    <property type="match status" value="1"/>
</dbReference>
<dbReference type="InterPro" id="IPR009010">
    <property type="entry name" value="Asp_de-COase-like_dom_sf"/>
</dbReference>
<dbReference type="InterPro" id="IPR003190">
    <property type="entry name" value="Asp_decarbox"/>
</dbReference>
<dbReference type="NCBIfam" id="TIGR00223">
    <property type="entry name" value="panD"/>
    <property type="match status" value="1"/>
</dbReference>
<dbReference type="PANTHER" id="PTHR21012">
    <property type="entry name" value="ASPARTATE 1-DECARBOXYLASE"/>
    <property type="match status" value="1"/>
</dbReference>
<dbReference type="PANTHER" id="PTHR21012:SF0">
    <property type="entry name" value="ASPARTATE 1-DECARBOXYLASE"/>
    <property type="match status" value="1"/>
</dbReference>
<dbReference type="Pfam" id="PF02261">
    <property type="entry name" value="Asp_decarbox"/>
    <property type="match status" value="1"/>
</dbReference>
<dbReference type="PIRSF" id="PIRSF006246">
    <property type="entry name" value="Asp_decarbox"/>
    <property type="match status" value="1"/>
</dbReference>
<dbReference type="SUPFAM" id="SSF50692">
    <property type="entry name" value="ADC-like"/>
    <property type="match status" value="1"/>
</dbReference>
<name>PAND_CLOK1</name>
<proteinExistence type="inferred from homology"/>
<organism>
    <name type="scientific">Clostridium kluyveri (strain NBRC 12016)</name>
    <dbReference type="NCBI Taxonomy" id="583346"/>
    <lineage>
        <taxon>Bacteria</taxon>
        <taxon>Bacillati</taxon>
        <taxon>Bacillota</taxon>
        <taxon>Clostridia</taxon>
        <taxon>Eubacteriales</taxon>
        <taxon>Clostridiaceae</taxon>
        <taxon>Clostridium</taxon>
    </lineage>
</organism>
<reference key="1">
    <citation type="submission" date="2005-09" db="EMBL/GenBank/DDBJ databases">
        <title>Complete genome sequence of Clostridium kluyveri and comparative genomics of Clostridia species.</title>
        <authorList>
            <person name="Inui M."/>
            <person name="Nonaka H."/>
            <person name="Shinoda Y."/>
            <person name="Ikenaga Y."/>
            <person name="Abe M."/>
            <person name="Naito K."/>
            <person name="Vertes A.A."/>
            <person name="Yukawa H."/>
        </authorList>
    </citation>
    <scope>NUCLEOTIDE SEQUENCE [LARGE SCALE GENOMIC DNA]</scope>
    <source>
        <strain>NBRC 12016</strain>
    </source>
</reference>
<keyword id="KW-0068">Autocatalytic cleavage</keyword>
<keyword id="KW-0963">Cytoplasm</keyword>
<keyword id="KW-0210">Decarboxylase</keyword>
<keyword id="KW-0456">Lyase</keyword>
<keyword id="KW-0566">Pantothenate biosynthesis</keyword>
<keyword id="KW-0670">Pyruvate</keyword>
<keyword id="KW-0704">Schiff base</keyword>
<keyword id="KW-0865">Zymogen</keyword>
<sequence length="127" mass="14418">MQLNMLKSKIHRATVTEANLNYVGSITIDRELMESAHIIEYEKIQVVDIDNGNRLETYVIAGEKGSKVICLNGAAARHVQPGDKVILMTYCQMDEEEAKIHKPIVIFLDENNSIFQITDYEKHGQVK</sequence>
<protein>
    <recommendedName>
        <fullName evidence="1">Aspartate 1-decarboxylase</fullName>
        <ecNumber evidence="1">4.1.1.11</ecNumber>
    </recommendedName>
    <alternativeName>
        <fullName evidence="1">Aspartate alpha-decarboxylase</fullName>
    </alternativeName>
    <component>
        <recommendedName>
            <fullName evidence="1">Aspartate 1-decarboxylase beta chain</fullName>
        </recommendedName>
    </component>
    <component>
        <recommendedName>
            <fullName evidence="1">Aspartate 1-decarboxylase alpha chain</fullName>
        </recommendedName>
    </component>
</protein>
<accession>B9E234</accession>
<comment type="function">
    <text evidence="1">Catalyzes the pyruvoyl-dependent decarboxylation of aspartate to produce beta-alanine.</text>
</comment>
<comment type="catalytic activity">
    <reaction evidence="1">
        <text>L-aspartate + H(+) = beta-alanine + CO2</text>
        <dbReference type="Rhea" id="RHEA:19497"/>
        <dbReference type="ChEBI" id="CHEBI:15378"/>
        <dbReference type="ChEBI" id="CHEBI:16526"/>
        <dbReference type="ChEBI" id="CHEBI:29991"/>
        <dbReference type="ChEBI" id="CHEBI:57966"/>
        <dbReference type="EC" id="4.1.1.11"/>
    </reaction>
</comment>
<comment type="cofactor">
    <cofactor evidence="1">
        <name>pyruvate</name>
        <dbReference type="ChEBI" id="CHEBI:15361"/>
    </cofactor>
    <text evidence="1">Binds 1 pyruvoyl group covalently per subunit.</text>
</comment>
<comment type="pathway">
    <text evidence="1">Cofactor biosynthesis; (R)-pantothenate biosynthesis; beta-alanine from L-aspartate: step 1/1.</text>
</comment>
<comment type="subunit">
    <text evidence="1">Heterooctamer of four alpha and four beta subunits.</text>
</comment>
<comment type="subcellular location">
    <subcellularLocation>
        <location evidence="1">Cytoplasm</location>
    </subcellularLocation>
</comment>
<comment type="PTM">
    <text evidence="1">Is synthesized initially as an inactive proenzyme, which is activated by self-cleavage at a specific serine bond to produce a beta-subunit with a hydroxyl group at its C-terminus and an alpha-subunit with a pyruvoyl group at its N-terminus.</text>
</comment>
<comment type="similarity">
    <text evidence="1">Belongs to the PanD family.</text>
</comment>
<gene>
    <name evidence="1" type="primary">panD</name>
    <name type="ordered locus">CKR_1508</name>
</gene>
<feature type="chain" id="PRO_1000191962" description="Aspartate 1-decarboxylase beta chain" evidence="1">
    <location>
        <begin position="1"/>
        <end position="24"/>
    </location>
</feature>
<feature type="chain" id="PRO_1000191963" description="Aspartate 1-decarboxylase alpha chain" evidence="1">
    <location>
        <begin position="25"/>
        <end position="127"/>
    </location>
</feature>
<feature type="active site" description="Schiff-base intermediate with substrate; via pyruvic acid" evidence="1">
    <location>
        <position position="25"/>
    </location>
</feature>
<feature type="active site" description="Proton donor" evidence="1">
    <location>
        <position position="58"/>
    </location>
</feature>
<feature type="binding site" evidence="1">
    <location>
        <position position="57"/>
    </location>
    <ligand>
        <name>substrate</name>
    </ligand>
</feature>
<feature type="binding site" evidence="1">
    <location>
        <begin position="73"/>
        <end position="75"/>
    </location>
    <ligand>
        <name>substrate</name>
    </ligand>
</feature>
<feature type="modified residue" description="Pyruvic acid (Ser)" evidence="1">
    <location>
        <position position="25"/>
    </location>
</feature>